<proteinExistence type="inferred from homology"/>
<feature type="chain" id="PRO_0000105938" description="Probable sulfate adenylyltransferase">
    <location>
        <begin position="1"/>
        <end position="389"/>
    </location>
</feature>
<keyword id="KW-0067">ATP-binding</keyword>
<keyword id="KW-0547">Nucleotide-binding</keyword>
<keyword id="KW-0548">Nucleotidyltransferase</keyword>
<keyword id="KW-1185">Reference proteome</keyword>
<keyword id="KW-0808">Transferase</keyword>
<evidence type="ECO:0000305" key="1"/>
<dbReference type="EC" id="2.7.7.4"/>
<dbReference type="EMBL" id="Y09476">
    <property type="protein sequence ID" value="CAA70656.1"/>
    <property type="status" value="ALT_INIT"/>
    <property type="molecule type" value="Genomic_DNA"/>
</dbReference>
<dbReference type="EMBL" id="AL009126">
    <property type="protein sequence ID" value="CAB12932.2"/>
    <property type="molecule type" value="Genomic_DNA"/>
</dbReference>
<dbReference type="PIR" id="B69839">
    <property type="entry name" value="B69839"/>
</dbReference>
<dbReference type="RefSeq" id="NP_388973.2">
    <property type="nucleotide sequence ID" value="NC_000964.3"/>
</dbReference>
<dbReference type="SMR" id="O06736"/>
<dbReference type="FunCoup" id="O06736">
    <property type="interactions" value="481"/>
</dbReference>
<dbReference type="STRING" id="224308.BSU10920"/>
<dbReference type="PaxDb" id="224308-BSU10920"/>
<dbReference type="EnsemblBacteria" id="CAB12932">
    <property type="protein sequence ID" value="CAB12932"/>
    <property type="gene ID" value="BSU_10920"/>
</dbReference>
<dbReference type="GeneID" id="939334"/>
<dbReference type="KEGG" id="bsu:BSU10920"/>
<dbReference type="PATRIC" id="fig|224308.179.peg.1174"/>
<dbReference type="eggNOG" id="COG2046">
    <property type="taxonomic scope" value="Bacteria"/>
</dbReference>
<dbReference type="InParanoid" id="O06736"/>
<dbReference type="OrthoDB" id="9804504at2"/>
<dbReference type="PhylomeDB" id="O06736"/>
<dbReference type="BioCyc" id="BSUB:BSU10920-MONOMER"/>
<dbReference type="UniPathway" id="UPA00140">
    <property type="reaction ID" value="UER00204"/>
</dbReference>
<dbReference type="Proteomes" id="UP000001570">
    <property type="component" value="Chromosome"/>
</dbReference>
<dbReference type="GO" id="GO:0005524">
    <property type="term" value="F:ATP binding"/>
    <property type="evidence" value="ECO:0007669"/>
    <property type="project" value="UniProtKB-KW"/>
</dbReference>
<dbReference type="GO" id="GO:0004781">
    <property type="term" value="F:sulfate adenylyltransferase (ATP) activity"/>
    <property type="evidence" value="ECO:0007669"/>
    <property type="project" value="UniProtKB-UniRule"/>
</dbReference>
<dbReference type="GO" id="GO:0070814">
    <property type="term" value="P:hydrogen sulfide biosynthetic process"/>
    <property type="evidence" value="ECO:0007669"/>
    <property type="project" value="UniProtKB-UniRule"/>
</dbReference>
<dbReference type="GO" id="GO:0000103">
    <property type="term" value="P:sulfate assimilation"/>
    <property type="evidence" value="ECO:0007669"/>
    <property type="project" value="UniProtKB-UniRule"/>
</dbReference>
<dbReference type="CDD" id="cd00517">
    <property type="entry name" value="ATPS"/>
    <property type="match status" value="1"/>
</dbReference>
<dbReference type="Gene3D" id="3.40.50.620">
    <property type="entry name" value="HUPs"/>
    <property type="match status" value="1"/>
</dbReference>
<dbReference type="Gene3D" id="3.10.400.10">
    <property type="entry name" value="Sulfate adenylyltransferase"/>
    <property type="match status" value="1"/>
</dbReference>
<dbReference type="HAMAP" id="MF_00066">
    <property type="entry name" value="Sulf_adenylyltr"/>
    <property type="match status" value="1"/>
</dbReference>
<dbReference type="InterPro" id="IPR025980">
    <property type="entry name" value="ATP-Sase_PUA-like_dom"/>
</dbReference>
<dbReference type="InterPro" id="IPR015947">
    <property type="entry name" value="PUA-like_sf"/>
</dbReference>
<dbReference type="InterPro" id="IPR014729">
    <property type="entry name" value="Rossmann-like_a/b/a_fold"/>
</dbReference>
<dbReference type="InterPro" id="IPR020792">
    <property type="entry name" value="SO4_adenylyltransferase_pro"/>
</dbReference>
<dbReference type="InterPro" id="IPR024951">
    <property type="entry name" value="Sulfurylase_cat_dom"/>
</dbReference>
<dbReference type="InterPro" id="IPR002650">
    <property type="entry name" value="Sulphate_adenylyltransferase"/>
</dbReference>
<dbReference type="NCBIfam" id="NF003166">
    <property type="entry name" value="PRK04149.1"/>
    <property type="match status" value="1"/>
</dbReference>
<dbReference type="NCBIfam" id="TIGR00339">
    <property type="entry name" value="sopT"/>
    <property type="match status" value="1"/>
</dbReference>
<dbReference type="PANTHER" id="PTHR43509">
    <property type="match status" value="1"/>
</dbReference>
<dbReference type="PANTHER" id="PTHR43509:SF1">
    <property type="entry name" value="SULFATE ADENYLYLTRANSFERASE"/>
    <property type="match status" value="1"/>
</dbReference>
<dbReference type="Pfam" id="PF01747">
    <property type="entry name" value="ATP-sulfurylase"/>
    <property type="match status" value="1"/>
</dbReference>
<dbReference type="Pfam" id="PF14306">
    <property type="entry name" value="PUA_2"/>
    <property type="match status" value="1"/>
</dbReference>
<dbReference type="SUPFAM" id="SSF52374">
    <property type="entry name" value="Nucleotidylyl transferase"/>
    <property type="match status" value="1"/>
</dbReference>
<dbReference type="SUPFAM" id="SSF88697">
    <property type="entry name" value="PUA domain-like"/>
    <property type="match status" value="1"/>
</dbReference>
<protein>
    <recommendedName>
        <fullName>Probable sulfate adenylyltransferase</fullName>
        <ecNumber>2.7.7.4</ecNumber>
    </recommendedName>
    <alternativeName>
        <fullName>ATP-sulfurylase</fullName>
    </alternativeName>
    <alternativeName>
        <fullName>Sulfate adenylate transferase</fullName>
        <shortName>SAT</shortName>
    </alternativeName>
</protein>
<gene>
    <name type="primary">yitA</name>
    <name type="ordered locus">BSU10920</name>
</gene>
<reference key="1">
    <citation type="journal article" date="1997" name="Microbiology">
        <title>A Bacillus subtilis chromosome segment at the 100 degrees to 102 degrees position encoding 11 membrane proteins.</title>
        <authorList>
            <person name="Roche B."/>
            <person name="Autret S."/>
            <person name="Levine A."/>
            <person name="Vannier F."/>
            <person name="Medina N."/>
            <person name="Seror S.J."/>
        </authorList>
    </citation>
    <scope>NUCLEOTIDE SEQUENCE [GENOMIC DNA]</scope>
    <source>
        <strain>168</strain>
    </source>
</reference>
<reference key="2">
    <citation type="journal article" date="1997" name="Nature">
        <title>The complete genome sequence of the Gram-positive bacterium Bacillus subtilis.</title>
        <authorList>
            <person name="Kunst F."/>
            <person name="Ogasawara N."/>
            <person name="Moszer I."/>
            <person name="Albertini A.M."/>
            <person name="Alloni G."/>
            <person name="Azevedo V."/>
            <person name="Bertero M.G."/>
            <person name="Bessieres P."/>
            <person name="Bolotin A."/>
            <person name="Borchert S."/>
            <person name="Borriss R."/>
            <person name="Boursier L."/>
            <person name="Brans A."/>
            <person name="Braun M."/>
            <person name="Brignell S.C."/>
            <person name="Bron S."/>
            <person name="Brouillet S."/>
            <person name="Bruschi C.V."/>
            <person name="Caldwell B."/>
            <person name="Capuano V."/>
            <person name="Carter N.M."/>
            <person name="Choi S.-K."/>
            <person name="Codani J.-J."/>
            <person name="Connerton I.F."/>
            <person name="Cummings N.J."/>
            <person name="Daniel R.A."/>
            <person name="Denizot F."/>
            <person name="Devine K.M."/>
            <person name="Duesterhoeft A."/>
            <person name="Ehrlich S.D."/>
            <person name="Emmerson P.T."/>
            <person name="Entian K.-D."/>
            <person name="Errington J."/>
            <person name="Fabret C."/>
            <person name="Ferrari E."/>
            <person name="Foulger D."/>
            <person name="Fritz C."/>
            <person name="Fujita M."/>
            <person name="Fujita Y."/>
            <person name="Fuma S."/>
            <person name="Galizzi A."/>
            <person name="Galleron N."/>
            <person name="Ghim S.-Y."/>
            <person name="Glaser P."/>
            <person name="Goffeau A."/>
            <person name="Golightly E.J."/>
            <person name="Grandi G."/>
            <person name="Guiseppi G."/>
            <person name="Guy B.J."/>
            <person name="Haga K."/>
            <person name="Haiech J."/>
            <person name="Harwood C.R."/>
            <person name="Henaut A."/>
            <person name="Hilbert H."/>
            <person name="Holsappel S."/>
            <person name="Hosono S."/>
            <person name="Hullo M.-F."/>
            <person name="Itaya M."/>
            <person name="Jones L.-M."/>
            <person name="Joris B."/>
            <person name="Karamata D."/>
            <person name="Kasahara Y."/>
            <person name="Klaerr-Blanchard M."/>
            <person name="Klein C."/>
            <person name="Kobayashi Y."/>
            <person name="Koetter P."/>
            <person name="Koningstein G."/>
            <person name="Krogh S."/>
            <person name="Kumano M."/>
            <person name="Kurita K."/>
            <person name="Lapidus A."/>
            <person name="Lardinois S."/>
            <person name="Lauber J."/>
            <person name="Lazarevic V."/>
            <person name="Lee S.-M."/>
            <person name="Levine A."/>
            <person name="Liu H."/>
            <person name="Masuda S."/>
            <person name="Mauel C."/>
            <person name="Medigue C."/>
            <person name="Medina N."/>
            <person name="Mellado R.P."/>
            <person name="Mizuno M."/>
            <person name="Moestl D."/>
            <person name="Nakai S."/>
            <person name="Noback M."/>
            <person name="Noone D."/>
            <person name="O'Reilly M."/>
            <person name="Ogawa K."/>
            <person name="Ogiwara A."/>
            <person name="Oudega B."/>
            <person name="Park S.-H."/>
            <person name="Parro V."/>
            <person name="Pohl T.M."/>
            <person name="Portetelle D."/>
            <person name="Porwollik S."/>
            <person name="Prescott A.M."/>
            <person name="Presecan E."/>
            <person name="Pujic P."/>
            <person name="Purnelle B."/>
            <person name="Rapoport G."/>
            <person name="Rey M."/>
            <person name="Reynolds S."/>
            <person name="Rieger M."/>
            <person name="Rivolta C."/>
            <person name="Rocha E."/>
            <person name="Roche B."/>
            <person name="Rose M."/>
            <person name="Sadaie Y."/>
            <person name="Sato T."/>
            <person name="Scanlan E."/>
            <person name="Schleich S."/>
            <person name="Schroeter R."/>
            <person name="Scoffone F."/>
            <person name="Sekiguchi J."/>
            <person name="Sekowska A."/>
            <person name="Seror S.J."/>
            <person name="Serror P."/>
            <person name="Shin B.-S."/>
            <person name="Soldo B."/>
            <person name="Sorokin A."/>
            <person name="Tacconi E."/>
            <person name="Takagi T."/>
            <person name="Takahashi H."/>
            <person name="Takemaru K."/>
            <person name="Takeuchi M."/>
            <person name="Tamakoshi A."/>
            <person name="Tanaka T."/>
            <person name="Terpstra P."/>
            <person name="Tognoni A."/>
            <person name="Tosato V."/>
            <person name="Uchiyama S."/>
            <person name="Vandenbol M."/>
            <person name="Vannier F."/>
            <person name="Vassarotti A."/>
            <person name="Viari A."/>
            <person name="Wambutt R."/>
            <person name="Wedler E."/>
            <person name="Wedler H."/>
            <person name="Weitzenegger T."/>
            <person name="Winters P."/>
            <person name="Wipat A."/>
            <person name="Yamamoto H."/>
            <person name="Yamane K."/>
            <person name="Yasumoto K."/>
            <person name="Yata K."/>
            <person name="Yoshida K."/>
            <person name="Yoshikawa H.-F."/>
            <person name="Zumstein E."/>
            <person name="Yoshikawa H."/>
            <person name="Danchin A."/>
        </authorList>
    </citation>
    <scope>NUCLEOTIDE SEQUENCE [LARGE SCALE GENOMIC DNA]</scope>
    <source>
        <strain>168</strain>
    </source>
</reference>
<comment type="catalytic activity">
    <reaction>
        <text>sulfate + ATP + H(+) = adenosine 5'-phosphosulfate + diphosphate</text>
        <dbReference type="Rhea" id="RHEA:18133"/>
        <dbReference type="ChEBI" id="CHEBI:15378"/>
        <dbReference type="ChEBI" id="CHEBI:16189"/>
        <dbReference type="ChEBI" id="CHEBI:30616"/>
        <dbReference type="ChEBI" id="CHEBI:33019"/>
        <dbReference type="ChEBI" id="CHEBI:58243"/>
        <dbReference type="EC" id="2.7.7.4"/>
    </reaction>
</comment>
<comment type="pathway">
    <text>Sulfur metabolism; hydrogen sulfide biosynthesis; sulfite from sulfate: step 1/3.</text>
</comment>
<comment type="similarity">
    <text evidence="1">Belongs to the sulfate adenylyltransferase family.</text>
</comment>
<comment type="sequence caution" evidence="1">
    <conflict type="erroneous initiation">
        <sequence resource="EMBL-CDS" id="CAA70656"/>
    </conflict>
</comment>
<organism>
    <name type="scientific">Bacillus subtilis (strain 168)</name>
    <dbReference type="NCBI Taxonomy" id="224308"/>
    <lineage>
        <taxon>Bacteria</taxon>
        <taxon>Bacillati</taxon>
        <taxon>Bacillota</taxon>
        <taxon>Bacilli</taxon>
        <taxon>Bacillales</taxon>
        <taxon>Bacillaceae</taxon>
        <taxon>Bacillus</taxon>
    </lineage>
</organism>
<accession>O06736</accession>
<sequence length="389" mass="43253">MNGNEPHGGVLINRCDPACHFEGCACQAELDQLALSDLELIAIGGYSPLTGFLGEKDYHSVVKEMRLANGLPWSLPITLPVGEKTARQLSAGDHVKLVKDGVTYGMITVTDIYQPDKTQEALSVFKTNDPAHPGVKKLLARPDYYIGGPITVSSLPDKSFEQFYATPAETRAAFQKLGWKTIVGFQTRNPVHRAHEYIQKTALETVDGLLLHPLVGETKSDDIPSDIRMESYQALLNHYYPKDRVMLSVFPAAMRYAGPREAIFHALVRKNYGCTHFIVGRDHAGVGSYYGTYDAQNIFQSFTEEELGIKPLFFEHSFYCRKCGNMGTSKTCPHSPRDHIHLSGTKVRELLRQGKKPPKEFSRPEVAAVLIKGLHQQPVAIKQNSGELQ</sequence>
<name>SAT2_BACSU</name>